<keyword id="KW-0067">ATP-binding</keyword>
<keyword id="KW-0418">Kinase</keyword>
<keyword id="KW-0460">Magnesium</keyword>
<keyword id="KW-0479">Metal-binding</keyword>
<keyword id="KW-0547">Nucleotide-binding</keyword>
<keyword id="KW-0784">Thiamine biosynthesis</keyword>
<keyword id="KW-0808">Transferase</keyword>
<evidence type="ECO:0000255" key="1">
    <source>
        <dbReference type="HAMAP-Rule" id="MF_00228"/>
    </source>
</evidence>
<comment type="function">
    <text evidence="1">Catalyzes the phosphorylation of the hydroxyl group of 4-methyl-5-beta-hydroxyethylthiazole (THZ).</text>
</comment>
<comment type="catalytic activity">
    <reaction evidence="1">
        <text>5-(2-hydroxyethyl)-4-methylthiazole + ATP = 4-methyl-5-(2-phosphooxyethyl)-thiazole + ADP + H(+)</text>
        <dbReference type="Rhea" id="RHEA:24212"/>
        <dbReference type="ChEBI" id="CHEBI:15378"/>
        <dbReference type="ChEBI" id="CHEBI:17957"/>
        <dbReference type="ChEBI" id="CHEBI:30616"/>
        <dbReference type="ChEBI" id="CHEBI:58296"/>
        <dbReference type="ChEBI" id="CHEBI:456216"/>
        <dbReference type="EC" id="2.7.1.50"/>
    </reaction>
</comment>
<comment type="cofactor">
    <cofactor evidence="1">
        <name>Mg(2+)</name>
        <dbReference type="ChEBI" id="CHEBI:18420"/>
    </cofactor>
</comment>
<comment type="pathway">
    <text evidence="1">Cofactor biosynthesis; thiamine diphosphate biosynthesis; 4-methyl-5-(2-phosphoethyl)-thiazole from 5-(2-hydroxyethyl)-4-methylthiazole: step 1/1.</text>
</comment>
<comment type="similarity">
    <text evidence="1">Belongs to the Thz kinase family.</text>
</comment>
<reference key="1">
    <citation type="submission" date="2007-06" db="EMBL/GenBank/DDBJ databases">
        <authorList>
            <person name="Brinkac L.M."/>
            <person name="Daugherty S."/>
            <person name="Dodson R.J."/>
            <person name="Madupu R."/>
            <person name="Brown J.L."/>
            <person name="Bruce D."/>
            <person name="Detter C."/>
            <person name="Munk C."/>
            <person name="Smith L.A."/>
            <person name="Smith T.J."/>
            <person name="White O."/>
            <person name="Brettin T.S."/>
        </authorList>
    </citation>
    <scope>NUCLEOTIDE SEQUENCE [LARGE SCALE GENOMIC DNA]</scope>
    <source>
        <strain>Langeland / NCTC 10281 / Type F</strain>
    </source>
</reference>
<accession>A7GAL1</accession>
<sequence length="263" mass="28464">MKNKNVIQKMREKIPLIHCITNYVTINDCANILLSFGASPAMCEAYDEVYDFVSISSALYINLGTLTKEQETAAVLASISAKNHNVPVVIDPVGCPAIKRKVEVINRIAEVGRIDIIKGNIGEIKFLAGMDSETRGVDSLDNGENALNACTQLAKKYNCIVAATGQKDFVSDGKRGSVIKNGTEMLTKVTGAGCMLGALCAATCANFEDKLVSTTAAILSMNIAGEKAYEKAQLPGSFRIALIDNIYMISDEEIWERGNVEWK</sequence>
<proteinExistence type="inferred from homology"/>
<name>THIM1_CLOBL</name>
<organism>
    <name type="scientific">Clostridium botulinum (strain Langeland / NCTC 10281 / Type F)</name>
    <dbReference type="NCBI Taxonomy" id="441772"/>
    <lineage>
        <taxon>Bacteria</taxon>
        <taxon>Bacillati</taxon>
        <taxon>Bacillota</taxon>
        <taxon>Clostridia</taxon>
        <taxon>Eubacteriales</taxon>
        <taxon>Clostridiaceae</taxon>
        <taxon>Clostridium</taxon>
    </lineage>
</organism>
<gene>
    <name evidence="1" type="primary">thiM1</name>
    <name type="ordered locus">CLI_0535</name>
</gene>
<protein>
    <recommendedName>
        <fullName evidence="1">Hydroxyethylthiazole kinase 1</fullName>
        <ecNumber evidence="1">2.7.1.50</ecNumber>
    </recommendedName>
    <alternativeName>
        <fullName evidence="1">4-methyl-5-beta-hydroxyethylthiazole kinase 1</fullName>
        <shortName evidence="1">TH kinase 1</shortName>
        <shortName evidence="1">Thz kinase 1</shortName>
    </alternativeName>
</protein>
<dbReference type="EC" id="2.7.1.50" evidence="1"/>
<dbReference type="EMBL" id="CP000728">
    <property type="protein sequence ID" value="ABS41348.1"/>
    <property type="molecule type" value="Genomic_DNA"/>
</dbReference>
<dbReference type="RefSeq" id="WP_011987460.1">
    <property type="nucleotide sequence ID" value="NC_009699.1"/>
</dbReference>
<dbReference type="SMR" id="A7GAL1"/>
<dbReference type="KEGG" id="cbf:CLI_0535"/>
<dbReference type="HOGENOM" id="CLU_019943_0_0_9"/>
<dbReference type="UniPathway" id="UPA00060">
    <property type="reaction ID" value="UER00139"/>
</dbReference>
<dbReference type="Proteomes" id="UP000002410">
    <property type="component" value="Chromosome"/>
</dbReference>
<dbReference type="GO" id="GO:0005524">
    <property type="term" value="F:ATP binding"/>
    <property type="evidence" value="ECO:0007669"/>
    <property type="project" value="UniProtKB-UniRule"/>
</dbReference>
<dbReference type="GO" id="GO:0004417">
    <property type="term" value="F:hydroxyethylthiazole kinase activity"/>
    <property type="evidence" value="ECO:0007669"/>
    <property type="project" value="UniProtKB-UniRule"/>
</dbReference>
<dbReference type="GO" id="GO:0000287">
    <property type="term" value="F:magnesium ion binding"/>
    <property type="evidence" value="ECO:0007669"/>
    <property type="project" value="UniProtKB-UniRule"/>
</dbReference>
<dbReference type="GO" id="GO:0009228">
    <property type="term" value="P:thiamine biosynthetic process"/>
    <property type="evidence" value="ECO:0007669"/>
    <property type="project" value="UniProtKB-KW"/>
</dbReference>
<dbReference type="GO" id="GO:0009229">
    <property type="term" value="P:thiamine diphosphate biosynthetic process"/>
    <property type="evidence" value="ECO:0007669"/>
    <property type="project" value="UniProtKB-UniRule"/>
</dbReference>
<dbReference type="CDD" id="cd01170">
    <property type="entry name" value="THZ_kinase"/>
    <property type="match status" value="1"/>
</dbReference>
<dbReference type="Gene3D" id="3.40.1190.20">
    <property type="match status" value="1"/>
</dbReference>
<dbReference type="HAMAP" id="MF_00228">
    <property type="entry name" value="Thz_kinase"/>
    <property type="match status" value="1"/>
</dbReference>
<dbReference type="InterPro" id="IPR000417">
    <property type="entry name" value="Hyethyz_kinase"/>
</dbReference>
<dbReference type="InterPro" id="IPR029056">
    <property type="entry name" value="Ribokinase-like"/>
</dbReference>
<dbReference type="NCBIfam" id="NF006830">
    <property type="entry name" value="PRK09355.1"/>
    <property type="match status" value="1"/>
</dbReference>
<dbReference type="NCBIfam" id="TIGR00694">
    <property type="entry name" value="thiM"/>
    <property type="match status" value="1"/>
</dbReference>
<dbReference type="Pfam" id="PF02110">
    <property type="entry name" value="HK"/>
    <property type="match status" value="1"/>
</dbReference>
<dbReference type="PIRSF" id="PIRSF000513">
    <property type="entry name" value="Thz_kinase"/>
    <property type="match status" value="1"/>
</dbReference>
<dbReference type="PRINTS" id="PR01099">
    <property type="entry name" value="HYETHTZKNASE"/>
</dbReference>
<dbReference type="SUPFAM" id="SSF53613">
    <property type="entry name" value="Ribokinase-like"/>
    <property type="match status" value="1"/>
</dbReference>
<feature type="chain" id="PRO_0000336549" description="Hydroxyethylthiazole kinase 1">
    <location>
        <begin position="1"/>
        <end position="263"/>
    </location>
</feature>
<feature type="binding site" evidence="1">
    <location>
        <position position="42"/>
    </location>
    <ligand>
        <name>substrate</name>
    </ligand>
</feature>
<feature type="binding site" evidence="1">
    <location>
        <position position="118"/>
    </location>
    <ligand>
        <name>ATP</name>
        <dbReference type="ChEBI" id="CHEBI:30616"/>
    </ligand>
</feature>
<feature type="binding site" evidence="1">
    <location>
        <position position="164"/>
    </location>
    <ligand>
        <name>ATP</name>
        <dbReference type="ChEBI" id="CHEBI:30616"/>
    </ligand>
</feature>
<feature type="binding site" evidence="1">
    <location>
        <position position="191"/>
    </location>
    <ligand>
        <name>substrate</name>
    </ligand>
</feature>